<organism evidence="2">
    <name type="scientific">Serratia plymuthica</name>
    <dbReference type="NCBI Taxonomy" id="82996"/>
    <lineage>
        <taxon>Bacteria</taxon>
        <taxon>Pseudomonadati</taxon>
        <taxon>Pseudomonadota</taxon>
        <taxon>Gammaproteobacteria</taxon>
        <taxon>Enterobacterales</taxon>
        <taxon>Yersiniaceae</taxon>
        <taxon>Serratia</taxon>
    </lineage>
</organism>
<accession>P83375</accession>
<evidence type="ECO:0000269" key="1">
    <source>
    </source>
</evidence>
<evidence type="ECO:0000305" key="2"/>
<evidence type="ECO:0000305" key="3">
    <source>
    </source>
</evidence>
<keyword id="KW-0044">Antibiotic</keyword>
<keyword id="KW-0929">Antimicrobial</keyword>
<keyword id="KW-0078">Bacteriocin</keyword>
<keyword id="KW-0903">Direct protein sequencing</keyword>
<reference key="1">
    <citation type="journal article" date="2002" name="Appl. Environ. Microbiol.">
        <title>Characterization of serracin P, a phage-tail-like bacteriocin, and its activity against Erwinia amylovora, the fire blight pathogen.</title>
        <authorList>
            <person name="Jabrane A."/>
            <person name="Sabri A."/>
            <person name="Compere P."/>
            <person name="Jacques P."/>
            <person name="Vandenberghe I."/>
            <person name="Van Beeumen J."/>
            <person name="Thonart P."/>
        </authorList>
    </citation>
    <scope>PROTEIN SEQUENCE</scope>
    <scope>FUNCTION</scope>
    <source>
        <strain>J7</strain>
    </source>
</reference>
<protein>
    <recommendedName>
        <fullName>Bacteriocin serracin-P 43 kDa subunit</fullName>
    </recommendedName>
</protein>
<dbReference type="GO" id="GO:0042742">
    <property type="term" value="P:defense response to bacterium"/>
    <property type="evidence" value="ECO:0007669"/>
    <property type="project" value="UniProtKB-KW"/>
</dbReference>
<dbReference type="GO" id="GO:0031640">
    <property type="term" value="P:killing of cells of another organism"/>
    <property type="evidence" value="ECO:0007669"/>
    <property type="project" value="UniProtKB-KW"/>
</dbReference>
<comment type="function">
    <text evidence="3">Major component of a prophage tail sheath.</text>
</comment>
<comment type="function">
    <text evidence="1">Antibacterial activity against Gram-negative bacterium E.amylovora.</text>
</comment>
<name>BSP43_SERPL</name>
<proteinExistence type="evidence at protein level"/>
<sequence length="9" mass="1095">DYHHGVRVL</sequence>
<feature type="chain" id="PRO_0000110582" description="Bacteriocin serracin-P 43 kDa subunit">
    <location>
        <begin position="1"/>
        <end position="9" status="greater than"/>
    </location>
</feature>
<feature type="non-terminal residue">
    <location>
        <position position="9"/>
    </location>
</feature>